<keyword id="KW-0997">Cell inner membrane</keyword>
<keyword id="KW-1003">Cell membrane</keyword>
<keyword id="KW-0472">Membrane</keyword>
<keyword id="KW-0812">Transmembrane</keyword>
<keyword id="KW-1133">Transmembrane helix</keyword>
<reference key="1">
    <citation type="journal article" date="2003" name="Genome Res.">
        <title>Comparative genome analysis of Vibrio vulnificus, a marine pathogen.</title>
        <authorList>
            <person name="Chen C.-Y."/>
            <person name="Wu K.-M."/>
            <person name="Chang Y.-C."/>
            <person name="Chang C.-H."/>
            <person name="Tsai H.-C."/>
            <person name="Liao T.-L."/>
            <person name="Liu Y.-M."/>
            <person name="Chen H.-J."/>
            <person name="Shen A.B.-T."/>
            <person name="Li J.-C."/>
            <person name="Su T.-L."/>
            <person name="Shao C.-P."/>
            <person name="Lee C.-T."/>
            <person name="Hor L.-I."/>
            <person name="Tsai S.-F."/>
        </authorList>
    </citation>
    <scope>NUCLEOTIDE SEQUENCE [LARGE SCALE GENOMIC DNA]</scope>
    <source>
        <strain>YJ016</strain>
    </source>
</reference>
<feature type="chain" id="PRO_0000072817" description="UPF0299 membrane protein VV1471">
    <location>
        <begin position="1"/>
        <end position="123"/>
    </location>
</feature>
<feature type="transmembrane region" description="Helical" evidence="1">
    <location>
        <begin position="8"/>
        <end position="28"/>
    </location>
</feature>
<feature type="transmembrane region" description="Helical" evidence="1">
    <location>
        <begin position="35"/>
        <end position="55"/>
    </location>
</feature>
<feature type="transmembrane region" description="Helical" evidence="1">
    <location>
        <begin position="71"/>
        <end position="91"/>
    </location>
</feature>
<feature type="transmembrane region" description="Helical" evidence="1">
    <location>
        <begin position="94"/>
        <end position="114"/>
    </location>
</feature>
<sequence length="123" mass="13152">MKFSLKDLFGLVVSFGLIFLALTIGSGIQHWTGTSVPGSVIGMLVLFVSMAIGLVKVEWVKPGASLLIRYMILLFVPISVGLMEHFDMLIANALPIIASAIGGSLIVLVSLGWLLQRILGKEA</sequence>
<protein>
    <recommendedName>
        <fullName evidence="1">UPF0299 membrane protein VV1471</fullName>
    </recommendedName>
</protein>
<comment type="subcellular location">
    <subcellularLocation>
        <location evidence="1">Cell inner membrane</location>
        <topology evidence="1">Multi-pass membrane protein</topology>
    </subcellularLocation>
</comment>
<comment type="similarity">
    <text evidence="1">Belongs to the UPF0299 family.</text>
</comment>
<comment type="sequence caution" evidence="2">
    <conflict type="erroneous initiation">
        <sequence resource="EMBL-CDS" id="BAC94235"/>
    </conflict>
</comment>
<gene>
    <name type="ordered locus">VV1471</name>
</gene>
<evidence type="ECO:0000255" key="1">
    <source>
        <dbReference type="HAMAP-Rule" id="MF_01144"/>
    </source>
</evidence>
<evidence type="ECO:0000305" key="2"/>
<proteinExistence type="inferred from homology"/>
<dbReference type="EMBL" id="BA000037">
    <property type="protein sequence ID" value="BAC94235.1"/>
    <property type="status" value="ALT_INIT"/>
    <property type="molecule type" value="Genomic_DNA"/>
</dbReference>
<dbReference type="RefSeq" id="WP_043877143.1">
    <property type="nucleotide sequence ID" value="NC_005139.1"/>
</dbReference>
<dbReference type="SMR" id="Q7MLF6"/>
<dbReference type="STRING" id="672.VV93_v1c13800"/>
<dbReference type="KEGG" id="vvy:VV1471"/>
<dbReference type="PATRIC" id="fig|196600.6.peg.1456"/>
<dbReference type="eggNOG" id="COG1380">
    <property type="taxonomic scope" value="Bacteria"/>
</dbReference>
<dbReference type="HOGENOM" id="CLU_113736_1_1_6"/>
<dbReference type="Proteomes" id="UP000002675">
    <property type="component" value="Chromosome I"/>
</dbReference>
<dbReference type="GO" id="GO:0005886">
    <property type="term" value="C:plasma membrane"/>
    <property type="evidence" value="ECO:0007669"/>
    <property type="project" value="UniProtKB-SubCell"/>
</dbReference>
<dbReference type="HAMAP" id="MF_01144">
    <property type="entry name" value="UPF0299"/>
    <property type="match status" value="1"/>
</dbReference>
<dbReference type="InterPro" id="IPR005538">
    <property type="entry name" value="LrgA/CidA"/>
</dbReference>
<dbReference type="InterPro" id="IPR022957">
    <property type="entry name" value="Uncharacterised_UPF0299"/>
</dbReference>
<dbReference type="PANTHER" id="PTHR33931">
    <property type="entry name" value="HOLIN-LIKE PROTEIN CIDA-RELATED"/>
    <property type="match status" value="1"/>
</dbReference>
<dbReference type="PANTHER" id="PTHR33931:SF5">
    <property type="entry name" value="UPF0299 MEMBRANE PROTEIN YOHJ"/>
    <property type="match status" value="1"/>
</dbReference>
<dbReference type="Pfam" id="PF03788">
    <property type="entry name" value="LrgA"/>
    <property type="match status" value="1"/>
</dbReference>
<organism>
    <name type="scientific">Vibrio vulnificus (strain YJ016)</name>
    <dbReference type="NCBI Taxonomy" id="196600"/>
    <lineage>
        <taxon>Bacteria</taxon>
        <taxon>Pseudomonadati</taxon>
        <taxon>Pseudomonadota</taxon>
        <taxon>Gammaproteobacteria</taxon>
        <taxon>Vibrionales</taxon>
        <taxon>Vibrionaceae</taxon>
        <taxon>Vibrio</taxon>
    </lineage>
</organism>
<name>Y1471_VIBVY</name>
<accession>Q7MLF6</accession>